<keyword id="KW-0119">Carbohydrate metabolism</keyword>
<keyword id="KW-0320">Glycogen biosynthesis</keyword>
<keyword id="KW-0321">Glycogen metabolism</keyword>
<keyword id="KW-0328">Glycosyltransferase</keyword>
<keyword id="KW-0808">Transferase</keyword>
<protein>
    <recommendedName>
        <fullName evidence="1">1,4-alpha-glucan branching enzyme GlgB</fullName>
        <ecNumber evidence="1">2.4.1.18</ecNumber>
    </recommendedName>
    <alternativeName>
        <fullName evidence="1">1,4-alpha-D-glucan:1,4-alpha-D-glucan 6-glucosyl-transferase</fullName>
    </alternativeName>
    <alternativeName>
        <fullName evidence="1">Alpha-(1-&gt;4)-glucan branching enzyme</fullName>
    </alternativeName>
    <alternativeName>
        <fullName evidence="1">Glycogen branching enzyme</fullName>
        <shortName evidence="1">BE</shortName>
    </alternativeName>
</protein>
<sequence length="759" mass="84944">MAKTKGLPKDTAVTPSPHLRPHTADLNRLLAGEHHDPHSILGAHEYDDHTVIRAYRPHATEVAAVVGGERHVFTHLEAGVFAVTLPFTGLIDYRLEVGYDHGGDQPHIHHTADAYRFLPTLGEMDLHLFSEGRHERLWEVLGAHPRTFETPDGVVEGVSFAVWAPNANGVQLIGDFNHWDGNEAQLRVLGSTGVWELFWPDFPVDGLYKFRIHGADGVVSERADPMAFATEVPPQTASRVTTSSYTWNDDAWMTQRAAQNPVFEPMSTLEVHLMSWRPGLSYVELADQLTEYVVEHGFTHVEMLPVAEHPFGGSWGYQVTSYYAPTSRLGTPDEFRYLVDRLHQAGIGVIVDWVPAHFPKDAWALGRFDGTALYEHADPRRGEQLDWGTYVFDFGRAEVRNFLVANALYWLQEFHVDGLRVDAVASMLYLDYSRPEGGWTPNIYGGRENLEAVQFLQEMNATVHKASPGIVTIAEESTSWPGVTRPTNLGGLGFSMKWNMGWMNDTLAFISRDPIHRSYHHHEMTFSMLYAFSENYVLPISHDEVVHGKGTLWGRMPGDDHRKAAGVRQLLAYQWAHPGKQLLFQGQEFGQRAEWSEERGVDWYQLDENSYSGGILRMISDMNGIYTSHRALWSHDTSPEGYSWIDANDSTNNVLSFLRYGDDGSVLACVFNFSGSEHSHYRLGLPHAGTWREVLNTDAADYNGAGIGNYGAVQATDEPWHGRPASAVMVLPPLSALWFEPVAAEAPVVQEPPTAPPLS</sequence>
<organism>
    <name type="scientific">Mycobacterium sp. (strain JLS)</name>
    <dbReference type="NCBI Taxonomy" id="164757"/>
    <lineage>
        <taxon>Bacteria</taxon>
        <taxon>Bacillati</taxon>
        <taxon>Actinomycetota</taxon>
        <taxon>Actinomycetes</taxon>
        <taxon>Mycobacteriales</taxon>
        <taxon>Mycobacteriaceae</taxon>
        <taxon>Mycobacterium</taxon>
    </lineage>
</organism>
<gene>
    <name evidence="1" type="primary">glgB</name>
    <name type="ordered locus">Mjls_3847</name>
</gene>
<reference key="1">
    <citation type="submission" date="2007-02" db="EMBL/GenBank/DDBJ databases">
        <title>Complete sequence of Mycobacterium sp. JLS.</title>
        <authorList>
            <consortium name="US DOE Joint Genome Institute"/>
            <person name="Copeland A."/>
            <person name="Lucas S."/>
            <person name="Lapidus A."/>
            <person name="Barry K."/>
            <person name="Detter J.C."/>
            <person name="Glavina del Rio T."/>
            <person name="Hammon N."/>
            <person name="Israni S."/>
            <person name="Dalin E."/>
            <person name="Tice H."/>
            <person name="Pitluck S."/>
            <person name="Chain P."/>
            <person name="Malfatti S."/>
            <person name="Shin M."/>
            <person name="Vergez L."/>
            <person name="Schmutz J."/>
            <person name="Larimer F."/>
            <person name="Land M."/>
            <person name="Hauser L."/>
            <person name="Kyrpides N."/>
            <person name="Mikhailova N."/>
            <person name="Miller C.D."/>
            <person name="Anderson A.J."/>
            <person name="Sims R.C."/>
            <person name="Richardson P."/>
        </authorList>
    </citation>
    <scope>NUCLEOTIDE SEQUENCE [LARGE SCALE GENOMIC DNA]</scope>
    <source>
        <strain>JLS</strain>
    </source>
</reference>
<accession>A3Q396</accession>
<evidence type="ECO:0000255" key="1">
    <source>
        <dbReference type="HAMAP-Rule" id="MF_00685"/>
    </source>
</evidence>
<evidence type="ECO:0000256" key="2">
    <source>
        <dbReference type="SAM" id="MobiDB-lite"/>
    </source>
</evidence>
<proteinExistence type="inferred from homology"/>
<comment type="function">
    <text evidence="1">Catalyzes the formation of the alpha-1,6-glucosidic linkages in glycogen by scission of a 1,4-alpha-linked oligosaccharide from growing alpha-1,4-glucan chains and the subsequent attachment of the oligosaccharide to the alpha-1,6 position.</text>
</comment>
<comment type="catalytic activity">
    <reaction evidence="1">
        <text>Transfers a segment of a (1-&gt;4)-alpha-D-glucan chain to a primary hydroxy group in a similar glucan chain.</text>
        <dbReference type="EC" id="2.4.1.18"/>
    </reaction>
</comment>
<comment type="pathway">
    <text evidence="1">Glycan biosynthesis; glycogen biosynthesis.</text>
</comment>
<comment type="subunit">
    <text evidence="1">Monomer.</text>
</comment>
<comment type="similarity">
    <text evidence="1">Belongs to the glycosyl hydrolase 13 family. GlgB subfamily.</text>
</comment>
<name>GLGB_MYCSJ</name>
<dbReference type="EC" id="2.4.1.18" evidence="1"/>
<dbReference type="EMBL" id="CP000580">
    <property type="protein sequence ID" value="ABN99623.1"/>
    <property type="molecule type" value="Genomic_DNA"/>
</dbReference>
<dbReference type="SMR" id="A3Q396"/>
<dbReference type="CAZy" id="CBM48">
    <property type="family name" value="Carbohydrate-Binding Module Family 48"/>
</dbReference>
<dbReference type="CAZy" id="GH13">
    <property type="family name" value="Glycoside Hydrolase Family 13"/>
</dbReference>
<dbReference type="KEGG" id="mjl:Mjls_3847"/>
<dbReference type="HOGENOM" id="CLU_004245_3_2_11"/>
<dbReference type="BioCyc" id="MSP164757:G1G8C-3884-MONOMER"/>
<dbReference type="UniPathway" id="UPA00164"/>
<dbReference type="GO" id="GO:0005829">
    <property type="term" value="C:cytosol"/>
    <property type="evidence" value="ECO:0007669"/>
    <property type="project" value="TreeGrafter"/>
</dbReference>
<dbReference type="GO" id="GO:0003844">
    <property type="term" value="F:1,4-alpha-glucan branching enzyme activity"/>
    <property type="evidence" value="ECO:0007669"/>
    <property type="project" value="UniProtKB-UniRule"/>
</dbReference>
<dbReference type="GO" id="GO:0043169">
    <property type="term" value="F:cation binding"/>
    <property type="evidence" value="ECO:0007669"/>
    <property type="project" value="InterPro"/>
</dbReference>
<dbReference type="GO" id="GO:0004553">
    <property type="term" value="F:hydrolase activity, hydrolyzing O-glycosyl compounds"/>
    <property type="evidence" value="ECO:0007669"/>
    <property type="project" value="InterPro"/>
</dbReference>
<dbReference type="GO" id="GO:0005978">
    <property type="term" value="P:glycogen biosynthetic process"/>
    <property type="evidence" value="ECO:0007669"/>
    <property type="project" value="UniProtKB-UniRule"/>
</dbReference>
<dbReference type="CDD" id="cd11322">
    <property type="entry name" value="AmyAc_Glg_BE"/>
    <property type="match status" value="1"/>
</dbReference>
<dbReference type="CDD" id="cd02855">
    <property type="entry name" value="E_set_GBE_prok_N"/>
    <property type="match status" value="1"/>
</dbReference>
<dbReference type="FunFam" id="2.60.40.10:FF:000169">
    <property type="entry name" value="1,4-alpha-glucan branching enzyme GlgB"/>
    <property type="match status" value="1"/>
</dbReference>
<dbReference type="FunFam" id="2.60.40.1180:FF:000002">
    <property type="entry name" value="1,4-alpha-glucan branching enzyme GlgB"/>
    <property type="match status" value="1"/>
</dbReference>
<dbReference type="FunFam" id="3.20.20.80:FF:000003">
    <property type="entry name" value="1,4-alpha-glucan branching enzyme GlgB"/>
    <property type="match status" value="1"/>
</dbReference>
<dbReference type="Gene3D" id="3.20.20.80">
    <property type="entry name" value="Glycosidases"/>
    <property type="match status" value="1"/>
</dbReference>
<dbReference type="Gene3D" id="2.60.40.1180">
    <property type="entry name" value="Golgi alpha-mannosidase II"/>
    <property type="match status" value="1"/>
</dbReference>
<dbReference type="Gene3D" id="2.60.40.10">
    <property type="entry name" value="Immunoglobulins"/>
    <property type="match status" value="2"/>
</dbReference>
<dbReference type="HAMAP" id="MF_00685">
    <property type="entry name" value="GlgB"/>
    <property type="match status" value="1"/>
</dbReference>
<dbReference type="InterPro" id="IPR006048">
    <property type="entry name" value="A-amylase/branching_C"/>
</dbReference>
<dbReference type="InterPro" id="IPR037439">
    <property type="entry name" value="Branching_enzy"/>
</dbReference>
<dbReference type="InterPro" id="IPR006407">
    <property type="entry name" value="GlgB"/>
</dbReference>
<dbReference type="InterPro" id="IPR054169">
    <property type="entry name" value="GlgB_N"/>
</dbReference>
<dbReference type="InterPro" id="IPR044143">
    <property type="entry name" value="GlgB_N_E_set_prok"/>
</dbReference>
<dbReference type="InterPro" id="IPR006047">
    <property type="entry name" value="Glyco_hydro_13_cat_dom"/>
</dbReference>
<dbReference type="InterPro" id="IPR004193">
    <property type="entry name" value="Glyco_hydro_13_N"/>
</dbReference>
<dbReference type="InterPro" id="IPR013780">
    <property type="entry name" value="Glyco_hydro_b"/>
</dbReference>
<dbReference type="InterPro" id="IPR017853">
    <property type="entry name" value="Glycoside_hydrolase_SF"/>
</dbReference>
<dbReference type="InterPro" id="IPR013783">
    <property type="entry name" value="Ig-like_fold"/>
</dbReference>
<dbReference type="InterPro" id="IPR014756">
    <property type="entry name" value="Ig_E-set"/>
</dbReference>
<dbReference type="NCBIfam" id="TIGR01515">
    <property type="entry name" value="branching_enzym"/>
    <property type="match status" value="1"/>
</dbReference>
<dbReference type="NCBIfam" id="NF003811">
    <property type="entry name" value="PRK05402.1"/>
    <property type="match status" value="1"/>
</dbReference>
<dbReference type="NCBIfam" id="NF008967">
    <property type="entry name" value="PRK12313.1"/>
    <property type="match status" value="1"/>
</dbReference>
<dbReference type="PANTHER" id="PTHR43651">
    <property type="entry name" value="1,4-ALPHA-GLUCAN-BRANCHING ENZYME"/>
    <property type="match status" value="1"/>
</dbReference>
<dbReference type="PANTHER" id="PTHR43651:SF3">
    <property type="entry name" value="1,4-ALPHA-GLUCAN-BRANCHING ENZYME"/>
    <property type="match status" value="1"/>
</dbReference>
<dbReference type="Pfam" id="PF00128">
    <property type="entry name" value="Alpha-amylase"/>
    <property type="match status" value="2"/>
</dbReference>
<dbReference type="Pfam" id="PF02806">
    <property type="entry name" value="Alpha-amylase_C"/>
    <property type="match status" value="1"/>
</dbReference>
<dbReference type="Pfam" id="PF02922">
    <property type="entry name" value="CBM_48"/>
    <property type="match status" value="1"/>
</dbReference>
<dbReference type="Pfam" id="PF22019">
    <property type="entry name" value="GlgB_N"/>
    <property type="match status" value="1"/>
</dbReference>
<dbReference type="PIRSF" id="PIRSF000463">
    <property type="entry name" value="GlgB"/>
    <property type="match status" value="1"/>
</dbReference>
<dbReference type="SMART" id="SM00642">
    <property type="entry name" value="Aamy"/>
    <property type="match status" value="1"/>
</dbReference>
<dbReference type="SUPFAM" id="SSF51445">
    <property type="entry name" value="(Trans)glycosidases"/>
    <property type="match status" value="1"/>
</dbReference>
<dbReference type="SUPFAM" id="SSF81296">
    <property type="entry name" value="E set domains"/>
    <property type="match status" value="2"/>
</dbReference>
<dbReference type="SUPFAM" id="SSF51011">
    <property type="entry name" value="Glycosyl hydrolase domain"/>
    <property type="match status" value="1"/>
</dbReference>
<feature type="chain" id="PRO_1000044983" description="1,4-alpha-glucan branching enzyme GlgB">
    <location>
        <begin position="1"/>
        <end position="759"/>
    </location>
</feature>
<feature type="region of interest" description="Disordered" evidence="2">
    <location>
        <begin position="1"/>
        <end position="21"/>
    </location>
</feature>
<feature type="active site" description="Nucleophile" evidence="1">
    <location>
        <position position="422"/>
    </location>
</feature>
<feature type="active site" description="Proton donor" evidence="1">
    <location>
        <position position="475"/>
    </location>
</feature>